<accession>C0JAW0</accession>
<keyword id="KW-0204">Cytolysis</keyword>
<keyword id="KW-1061">Dermonecrotic toxin</keyword>
<keyword id="KW-1015">Disulfide bond</keyword>
<keyword id="KW-0325">Glycoprotein</keyword>
<keyword id="KW-0354">Hemolysis</keyword>
<keyword id="KW-0442">Lipid degradation</keyword>
<keyword id="KW-0443">Lipid metabolism</keyword>
<keyword id="KW-0456">Lyase</keyword>
<keyword id="KW-0460">Magnesium</keyword>
<keyword id="KW-0479">Metal-binding</keyword>
<keyword id="KW-0964">Secreted</keyword>
<keyword id="KW-0800">Toxin</keyword>
<feature type="chain" id="PRO_0000392789" description="Dermonecrotic toxin LarSicTox-alphaIB1b">
    <location>
        <begin position="1" status="less than"/>
        <end position="273"/>
    </location>
</feature>
<feature type="active site" evidence="5">
    <location>
        <position position="5"/>
    </location>
</feature>
<feature type="active site" description="Nucleophile" evidence="5">
    <location>
        <position position="41"/>
    </location>
</feature>
<feature type="binding site" evidence="5">
    <location>
        <position position="25"/>
    </location>
    <ligand>
        <name>Mg(2+)</name>
        <dbReference type="ChEBI" id="CHEBI:18420"/>
    </ligand>
</feature>
<feature type="binding site" evidence="5">
    <location>
        <position position="27"/>
    </location>
    <ligand>
        <name>Mg(2+)</name>
        <dbReference type="ChEBI" id="CHEBI:18420"/>
    </ligand>
</feature>
<feature type="binding site" evidence="5">
    <location>
        <position position="85"/>
    </location>
    <ligand>
        <name>Mg(2+)</name>
        <dbReference type="ChEBI" id="CHEBI:18420"/>
    </ligand>
</feature>
<feature type="glycosylation site" description="N-linked (GlcNAc...) asparagine" evidence="6">
    <location>
        <position position="250"/>
    </location>
</feature>
<feature type="disulfide bond" evidence="3">
    <location>
        <begin position="45"/>
        <end position="51"/>
    </location>
</feature>
<feature type="disulfide bond" evidence="3">
    <location>
        <begin position="47"/>
        <end position="190"/>
    </location>
</feature>
<feature type="non-terminal residue">
    <location>
        <position position="1"/>
    </location>
</feature>
<dbReference type="EC" id="4.6.1.-" evidence="4"/>
<dbReference type="EMBL" id="FJ171395">
    <property type="protein sequence ID" value="ACN48891.1"/>
    <property type="molecule type" value="mRNA"/>
</dbReference>
<dbReference type="SMR" id="C0JAW0"/>
<dbReference type="GO" id="GO:0005576">
    <property type="term" value="C:extracellular region"/>
    <property type="evidence" value="ECO:0007669"/>
    <property type="project" value="UniProtKB-SubCell"/>
</dbReference>
<dbReference type="GO" id="GO:0016829">
    <property type="term" value="F:lyase activity"/>
    <property type="evidence" value="ECO:0007669"/>
    <property type="project" value="UniProtKB-KW"/>
</dbReference>
<dbReference type="GO" id="GO:0046872">
    <property type="term" value="F:metal ion binding"/>
    <property type="evidence" value="ECO:0007669"/>
    <property type="project" value="UniProtKB-KW"/>
</dbReference>
<dbReference type="GO" id="GO:0008081">
    <property type="term" value="F:phosphoric diester hydrolase activity"/>
    <property type="evidence" value="ECO:0007669"/>
    <property type="project" value="InterPro"/>
</dbReference>
<dbReference type="GO" id="GO:0090729">
    <property type="term" value="F:toxin activity"/>
    <property type="evidence" value="ECO:0007669"/>
    <property type="project" value="UniProtKB-KW"/>
</dbReference>
<dbReference type="GO" id="GO:0031640">
    <property type="term" value="P:killing of cells of another organism"/>
    <property type="evidence" value="ECO:0007669"/>
    <property type="project" value="UniProtKB-KW"/>
</dbReference>
<dbReference type="GO" id="GO:0016042">
    <property type="term" value="P:lipid catabolic process"/>
    <property type="evidence" value="ECO:0007669"/>
    <property type="project" value="UniProtKB-KW"/>
</dbReference>
<dbReference type="CDD" id="cd08576">
    <property type="entry name" value="GDPD_like_SMaseD_PLD"/>
    <property type="match status" value="1"/>
</dbReference>
<dbReference type="Gene3D" id="3.20.20.190">
    <property type="entry name" value="Phosphatidylinositol (PI) phosphodiesterase"/>
    <property type="match status" value="1"/>
</dbReference>
<dbReference type="InterPro" id="IPR017946">
    <property type="entry name" value="PLC-like_Pdiesterase_TIM-brl"/>
</dbReference>
<dbReference type="Pfam" id="PF13653">
    <property type="entry name" value="GDPD_2"/>
    <property type="match status" value="1"/>
</dbReference>
<dbReference type="SUPFAM" id="SSF51695">
    <property type="entry name" value="PLC-like phosphodiesterases"/>
    <property type="match status" value="1"/>
</dbReference>
<protein>
    <recommendedName>
        <fullName evidence="7">Dermonecrotic toxin LarSicTox-alphaIB1b</fullName>
        <ecNumber evidence="4">4.6.1.-</ecNumber>
    </recommendedName>
    <alternativeName>
        <fullName>Phospholipase D</fullName>
        <shortName>PLD</shortName>
    </alternativeName>
    <alternativeName>
        <fullName>Sphingomyelin phosphodiesterase D</fullName>
        <shortName>SMD</shortName>
        <shortName>SMase D</shortName>
        <shortName>Sphingomyelinase D</shortName>
    </alternativeName>
</protein>
<evidence type="ECO:0000250" key="1">
    <source>
        <dbReference type="UniProtKB" id="A0A0D4WTV1"/>
    </source>
</evidence>
<evidence type="ECO:0000250" key="2">
    <source>
        <dbReference type="UniProtKB" id="A0A0D4WV12"/>
    </source>
</evidence>
<evidence type="ECO:0000250" key="3">
    <source>
        <dbReference type="UniProtKB" id="P0CE80"/>
    </source>
</evidence>
<evidence type="ECO:0000250" key="4">
    <source>
        <dbReference type="UniProtKB" id="Q4ZFU2"/>
    </source>
</evidence>
<evidence type="ECO:0000250" key="5">
    <source>
        <dbReference type="UniProtKB" id="Q8I914"/>
    </source>
</evidence>
<evidence type="ECO:0000255" key="6"/>
<evidence type="ECO:0000303" key="7">
    <source>
    </source>
</evidence>
<evidence type="ECO:0000305" key="8"/>
<evidence type="ECO:0000305" key="9">
    <source>
    </source>
</evidence>
<organism>
    <name type="scientific">Loxosceles arizonica</name>
    <name type="common">Arizona brown spider</name>
    <dbReference type="NCBI Taxonomy" id="196454"/>
    <lineage>
        <taxon>Eukaryota</taxon>
        <taxon>Metazoa</taxon>
        <taxon>Ecdysozoa</taxon>
        <taxon>Arthropoda</taxon>
        <taxon>Chelicerata</taxon>
        <taxon>Arachnida</taxon>
        <taxon>Araneae</taxon>
        <taxon>Araneomorphae</taxon>
        <taxon>Haplogynae</taxon>
        <taxon>Scytodoidea</taxon>
        <taxon>Sicariidae</taxon>
        <taxon>Loxosceles</taxon>
    </lineage>
</organism>
<sequence>WIMGHMVNAIAQIDEFVNLGANSIETDVSFDSSDNPEYTYHGIPCDCGRTCTKWEHFNEFLKGLRKATTPGDSKYHEKLVLVVFDLKTGSLYDNQASDAGKKLAKSLLQNYWNNGNNGGRAYIVLSIPNLAHYKLITGFKEALTSEGHPELMDKVGYDFSGNDDIGDVANAYKKAGVTGHVWQSDGITNCLLRGLDRVRKAVANRDSSNGYINKVYYWTVDKRQSTRDALDAGVDGIMTNYPDVIADVLNESAYKAKFRIASYDDNPWETFKN</sequence>
<comment type="function">
    <text evidence="1 3">Dermonecrotic toxins cleave the phosphodiester linkage between the phosphate and headgroup of certain phospholipids (sphingolipid and lysolipid substrates), forming an alcohol (often choline) and a cyclic phosphate (By similarity). This toxin acts on sphingomyelin (SM) (By similarity). It may also act on ceramide phosphoethanolamine (CPE), lysophosphatidylcholine (LPC) and lysophosphatidylethanolamine (LPE), but not on lysophosphatidylserine (LPS), and lysophosphatidylglycerol (LPG) (By similarity). It acts by transphosphatidylation, releasing exclusively cyclic phosphate products as second products (By similarity). Induces dermonecrosis, hemolysis, increased vascular permeability, edema, inflammatory response, and platelet aggregation (By similarity).</text>
</comment>
<comment type="catalytic activity">
    <reaction evidence="1">
        <text>an N-(acyl)-sphingosylphosphocholine = an N-(acyl)-sphingosyl-1,3-cyclic phosphate + choline</text>
        <dbReference type="Rhea" id="RHEA:60652"/>
        <dbReference type="ChEBI" id="CHEBI:15354"/>
        <dbReference type="ChEBI" id="CHEBI:64583"/>
        <dbReference type="ChEBI" id="CHEBI:143892"/>
    </reaction>
</comment>
<comment type="catalytic activity">
    <reaction evidence="1">
        <text>an N-(acyl)-sphingosylphosphoethanolamine = an N-(acyl)-sphingosyl-1,3-cyclic phosphate + ethanolamine</text>
        <dbReference type="Rhea" id="RHEA:60648"/>
        <dbReference type="ChEBI" id="CHEBI:57603"/>
        <dbReference type="ChEBI" id="CHEBI:143891"/>
        <dbReference type="ChEBI" id="CHEBI:143892"/>
    </reaction>
</comment>
<comment type="catalytic activity">
    <reaction evidence="1">
        <text>a 1-acyl-sn-glycero-3-phosphocholine = a 1-acyl-sn-glycero-2,3-cyclic phosphate + choline</text>
        <dbReference type="Rhea" id="RHEA:60700"/>
        <dbReference type="ChEBI" id="CHEBI:15354"/>
        <dbReference type="ChEBI" id="CHEBI:58168"/>
        <dbReference type="ChEBI" id="CHEBI:143947"/>
    </reaction>
</comment>
<comment type="catalytic activity">
    <reaction evidence="1">
        <text>a 1-acyl-sn-glycero-3-phosphoethanolamine = a 1-acyl-sn-glycero-2,3-cyclic phosphate + ethanolamine</text>
        <dbReference type="Rhea" id="RHEA:60704"/>
        <dbReference type="ChEBI" id="CHEBI:57603"/>
        <dbReference type="ChEBI" id="CHEBI:64381"/>
        <dbReference type="ChEBI" id="CHEBI:143947"/>
    </reaction>
</comment>
<comment type="cofactor">
    <cofactor evidence="5">
        <name>Mg(2+)</name>
        <dbReference type="ChEBI" id="CHEBI:18420"/>
    </cofactor>
    <text evidence="5">Binds 1 Mg(2+) ion per subunit.</text>
</comment>
<comment type="subcellular location">
    <subcellularLocation>
        <location evidence="9">Secreted</location>
    </subcellularLocation>
</comment>
<comment type="tissue specificity">
    <text evidence="9">Expressed by the venom gland.</text>
</comment>
<comment type="similarity">
    <text evidence="8">Belongs to the arthropod phospholipase D family. Class II subfamily.</text>
</comment>
<comment type="caution">
    <text evidence="1 2 4">The most common activity assay for dermonecrotic toxins detects enzymatic activity by monitoring choline release from substrate. Liberation of choline from sphingomyelin (SM) or lysophosphatidylcholine (LPC) is commonly assumed to result from substrate hydrolysis, giving either ceramide-1-phosphate (C1P) or lysophosphatidic acid (LPA), respectively, as a second product. However, two studies from Lajoie and colleagues (2013 and 2015) report the observation of exclusive formation of cyclic phosphate products as second products, resulting from intramolecular transphosphatidylation. Cyclic phosphates have vastly different biological properties from their monoester counterparts, and they may be relevant to the pathology of brown spider envenomation.</text>
</comment>
<reference key="1">
    <citation type="journal article" date="2009" name="Mol. Biol. Evol.">
        <title>Molecular evolution, functional variation, and proposed nomenclature of the gene family that includes sphingomyelinase D in sicariid spider venoms.</title>
        <authorList>
            <person name="Binford G.J."/>
            <person name="Bodner M.R."/>
            <person name="Cordes M.H."/>
            <person name="Baldwin K.L."/>
            <person name="Rynerson M.R."/>
            <person name="Burns S.N."/>
            <person name="Zobel-Thropp P.A."/>
        </authorList>
    </citation>
    <scope>NUCLEOTIDE SEQUENCE [MRNA]</scope>
    <scope>NOMENCLATURE</scope>
    <source>
        <tissue>Venom gland</tissue>
    </source>
</reference>
<name>A1KB_LOXAR</name>
<proteinExistence type="evidence at transcript level"/>